<comment type="subcellular location">
    <subcellularLocation>
        <location evidence="1">Cell membrane</location>
        <topology evidence="1">Multi-pass membrane protein</topology>
    </subcellularLocation>
</comment>
<comment type="similarity">
    <text evidence="1">Belongs to the UPF0060 family.</text>
</comment>
<keyword id="KW-1003">Cell membrane</keyword>
<keyword id="KW-0472">Membrane</keyword>
<keyword id="KW-1185">Reference proteome</keyword>
<keyword id="KW-0812">Transmembrane</keyword>
<keyword id="KW-1133">Transmembrane helix</keyword>
<feature type="chain" id="PRO_0000162353" description="UPF0060 membrane protein SCO3297">
    <location>
        <begin position="1"/>
        <end position="112"/>
    </location>
</feature>
<feature type="transmembrane region" description="Helical" evidence="1">
    <location>
        <begin position="8"/>
        <end position="28"/>
    </location>
</feature>
<feature type="transmembrane region" description="Helical" evidence="1">
    <location>
        <begin position="33"/>
        <end position="53"/>
    </location>
</feature>
<feature type="transmembrane region" description="Helical" evidence="1">
    <location>
        <begin position="62"/>
        <end position="82"/>
    </location>
</feature>
<feature type="transmembrane region" description="Helical" evidence="1">
    <location>
        <begin position="88"/>
        <end position="108"/>
    </location>
</feature>
<evidence type="ECO:0000255" key="1">
    <source>
        <dbReference type="HAMAP-Rule" id="MF_00010"/>
    </source>
</evidence>
<protein>
    <recommendedName>
        <fullName evidence="1">UPF0060 membrane protein SCO3297</fullName>
    </recommendedName>
</protein>
<reference key="1">
    <citation type="journal article" date="2002" name="Nature">
        <title>Complete genome sequence of the model actinomycete Streptomyces coelicolor A3(2).</title>
        <authorList>
            <person name="Bentley S.D."/>
            <person name="Chater K.F."/>
            <person name="Cerdeno-Tarraga A.-M."/>
            <person name="Challis G.L."/>
            <person name="Thomson N.R."/>
            <person name="James K.D."/>
            <person name="Harris D.E."/>
            <person name="Quail M.A."/>
            <person name="Kieser H."/>
            <person name="Harper D."/>
            <person name="Bateman A."/>
            <person name="Brown S."/>
            <person name="Chandra G."/>
            <person name="Chen C.W."/>
            <person name="Collins M."/>
            <person name="Cronin A."/>
            <person name="Fraser A."/>
            <person name="Goble A."/>
            <person name="Hidalgo J."/>
            <person name="Hornsby T."/>
            <person name="Howarth S."/>
            <person name="Huang C.-H."/>
            <person name="Kieser T."/>
            <person name="Larke L."/>
            <person name="Murphy L.D."/>
            <person name="Oliver K."/>
            <person name="O'Neil S."/>
            <person name="Rabbinowitsch E."/>
            <person name="Rajandream M.A."/>
            <person name="Rutherford K.M."/>
            <person name="Rutter S."/>
            <person name="Seeger K."/>
            <person name="Saunders D."/>
            <person name="Sharp S."/>
            <person name="Squares R."/>
            <person name="Squares S."/>
            <person name="Taylor K."/>
            <person name="Warren T."/>
            <person name="Wietzorrek A."/>
            <person name="Woodward J.R."/>
            <person name="Barrell B.G."/>
            <person name="Parkhill J."/>
            <person name="Hopwood D.A."/>
        </authorList>
    </citation>
    <scope>NUCLEOTIDE SEQUENCE [LARGE SCALE GENOMIC DNA]</scope>
    <source>
        <strain>ATCC BAA-471 / A3(2) / M145</strain>
    </source>
</reference>
<name>Y3297_STRCO</name>
<dbReference type="EMBL" id="AL939116">
    <property type="protein sequence ID" value="CAB41283.1"/>
    <property type="molecule type" value="Genomic_DNA"/>
</dbReference>
<dbReference type="PIR" id="T36117">
    <property type="entry name" value="T36117"/>
</dbReference>
<dbReference type="RefSeq" id="NP_627508.1">
    <property type="nucleotide sequence ID" value="NC_003888.3"/>
</dbReference>
<dbReference type="RefSeq" id="WP_011028891.1">
    <property type="nucleotide sequence ID" value="NZ_VNID01000025.1"/>
</dbReference>
<dbReference type="SMR" id="Q9X889"/>
<dbReference type="STRING" id="100226.gene:17760916"/>
<dbReference type="PaxDb" id="100226-SCO3297"/>
<dbReference type="KEGG" id="sco:SCO3297"/>
<dbReference type="PATRIC" id="fig|100226.15.peg.3358"/>
<dbReference type="eggNOG" id="COG1742">
    <property type="taxonomic scope" value="Bacteria"/>
</dbReference>
<dbReference type="HOGENOM" id="CLU_117653_0_1_11"/>
<dbReference type="InParanoid" id="Q9X889"/>
<dbReference type="OrthoDB" id="123240at2"/>
<dbReference type="PhylomeDB" id="Q9X889"/>
<dbReference type="Proteomes" id="UP000001973">
    <property type="component" value="Chromosome"/>
</dbReference>
<dbReference type="GO" id="GO:0005886">
    <property type="term" value="C:plasma membrane"/>
    <property type="evidence" value="ECO:0000318"/>
    <property type="project" value="GO_Central"/>
</dbReference>
<dbReference type="HAMAP" id="MF_00010">
    <property type="entry name" value="UPF0060"/>
    <property type="match status" value="1"/>
</dbReference>
<dbReference type="InterPro" id="IPR003844">
    <property type="entry name" value="UPF0060"/>
</dbReference>
<dbReference type="NCBIfam" id="NF002586">
    <property type="entry name" value="PRK02237.1"/>
    <property type="match status" value="1"/>
</dbReference>
<dbReference type="PANTHER" id="PTHR36116">
    <property type="entry name" value="UPF0060 MEMBRANE PROTEIN YNFA"/>
    <property type="match status" value="1"/>
</dbReference>
<dbReference type="PANTHER" id="PTHR36116:SF1">
    <property type="entry name" value="UPF0060 MEMBRANE PROTEIN YNFA"/>
    <property type="match status" value="1"/>
</dbReference>
<dbReference type="Pfam" id="PF02694">
    <property type="entry name" value="UPF0060"/>
    <property type="match status" value="1"/>
</dbReference>
<dbReference type="SUPFAM" id="SSF103481">
    <property type="entry name" value="Multidrug resistance efflux transporter EmrE"/>
    <property type="match status" value="1"/>
</dbReference>
<proteinExistence type="inferred from homology"/>
<gene>
    <name type="ordered locus">SCO3297</name>
    <name type="ORF">SCE15.14</name>
</gene>
<organism>
    <name type="scientific">Streptomyces coelicolor (strain ATCC BAA-471 / A3(2) / M145)</name>
    <dbReference type="NCBI Taxonomy" id="100226"/>
    <lineage>
        <taxon>Bacteria</taxon>
        <taxon>Bacillati</taxon>
        <taxon>Actinomycetota</taxon>
        <taxon>Actinomycetes</taxon>
        <taxon>Kitasatosporales</taxon>
        <taxon>Streptomycetaceae</taxon>
        <taxon>Streptomyces</taxon>
        <taxon>Streptomyces albidoflavus group</taxon>
    </lineage>
</organism>
<accession>Q9X889</accession>
<sequence length="112" mass="11924">MLVLRSAALFVVAALFEIGGAWLVWQGVREQRGWLWAAGGVLALGAYGFVATFQPDAHFGRILAAYGGIFVTGSILWGVVADGYRPDRWDIAGALVCLAGMALIMWAPRNGG</sequence>